<feature type="chain" id="PRO_0000214821" description="Anhydro-N-acetylmuramic acid kinase">
    <location>
        <begin position="1"/>
        <end position="369"/>
    </location>
</feature>
<feature type="binding site" evidence="1">
    <location>
        <begin position="12"/>
        <end position="19"/>
    </location>
    <ligand>
        <name>ATP</name>
        <dbReference type="ChEBI" id="CHEBI:30616"/>
    </ligand>
</feature>
<evidence type="ECO:0000255" key="1"/>
<evidence type="ECO:0000269" key="2">
    <source>
    </source>
</evidence>
<evidence type="ECO:0000269" key="3">
    <source>
    </source>
</evidence>
<evidence type="ECO:0000305" key="4"/>
<keyword id="KW-0067">ATP-binding</keyword>
<keyword id="KW-0119">Carbohydrate metabolism</keyword>
<keyword id="KW-0418">Kinase</keyword>
<keyword id="KW-0547">Nucleotide-binding</keyword>
<keyword id="KW-1185">Reference proteome</keyword>
<keyword id="KW-0808">Transferase</keyword>
<proteinExistence type="evidence at protein level"/>
<organism>
    <name type="scientific">Escherichia coli (strain K12)</name>
    <dbReference type="NCBI Taxonomy" id="83333"/>
    <lineage>
        <taxon>Bacteria</taxon>
        <taxon>Pseudomonadati</taxon>
        <taxon>Pseudomonadota</taxon>
        <taxon>Gammaproteobacteria</taxon>
        <taxon>Enterobacterales</taxon>
        <taxon>Enterobacteriaceae</taxon>
        <taxon>Escherichia</taxon>
    </lineage>
</organism>
<accession>P77570</accession>
<dbReference type="EC" id="2.7.1.170"/>
<dbReference type="EMBL" id="U00096">
    <property type="protein sequence ID" value="AAC74712.1"/>
    <property type="molecule type" value="Genomic_DNA"/>
</dbReference>
<dbReference type="EMBL" id="AP009048">
    <property type="protein sequence ID" value="BAA15401.1"/>
    <property type="molecule type" value="Genomic_DNA"/>
</dbReference>
<dbReference type="PIR" id="B64921">
    <property type="entry name" value="B64921"/>
</dbReference>
<dbReference type="RefSeq" id="NP_416157.1">
    <property type="nucleotide sequence ID" value="NC_000913.3"/>
</dbReference>
<dbReference type="RefSeq" id="WP_000835039.1">
    <property type="nucleotide sequence ID" value="NZ_LN832404.1"/>
</dbReference>
<dbReference type="SMR" id="P77570"/>
<dbReference type="BioGRID" id="4263491">
    <property type="interactions" value="21"/>
</dbReference>
<dbReference type="FunCoup" id="P77570">
    <property type="interactions" value="95"/>
</dbReference>
<dbReference type="IntAct" id="P77570">
    <property type="interactions" value="7"/>
</dbReference>
<dbReference type="STRING" id="511145.b1640"/>
<dbReference type="jPOST" id="P77570"/>
<dbReference type="PaxDb" id="511145-b1640"/>
<dbReference type="EnsemblBacteria" id="AAC74712">
    <property type="protein sequence ID" value="AAC74712"/>
    <property type="gene ID" value="b1640"/>
</dbReference>
<dbReference type="GeneID" id="946810"/>
<dbReference type="KEGG" id="ecj:JW1632"/>
<dbReference type="KEGG" id="eco:b1640"/>
<dbReference type="KEGG" id="ecoc:C3026_09420"/>
<dbReference type="PATRIC" id="fig|1411691.4.peg.620"/>
<dbReference type="EchoBASE" id="EB3700"/>
<dbReference type="eggNOG" id="COG2377">
    <property type="taxonomic scope" value="Bacteria"/>
</dbReference>
<dbReference type="HOGENOM" id="CLU_038782_0_0_6"/>
<dbReference type="InParanoid" id="P77570"/>
<dbReference type="OMA" id="TGPGNMV"/>
<dbReference type="OrthoDB" id="9763949at2"/>
<dbReference type="PhylomeDB" id="P77570"/>
<dbReference type="BioCyc" id="EcoCyc:G6880-MONOMER"/>
<dbReference type="BioCyc" id="MetaCyc:G6880-MONOMER"/>
<dbReference type="BRENDA" id="2.7.1.170">
    <property type="organism ID" value="2026"/>
</dbReference>
<dbReference type="SABIO-RK" id="P77570"/>
<dbReference type="UniPathway" id="UPA00343"/>
<dbReference type="UniPathway" id="UPA00544"/>
<dbReference type="PRO" id="PR:P77570"/>
<dbReference type="Proteomes" id="UP000000625">
    <property type="component" value="Chromosome"/>
</dbReference>
<dbReference type="GO" id="GO:0005524">
    <property type="term" value="F:ATP binding"/>
    <property type="evidence" value="ECO:0007669"/>
    <property type="project" value="UniProtKB-UniRule"/>
</dbReference>
<dbReference type="GO" id="GO:0016301">
    <property type="term" value="F:kinase activity"/>
    <property type="evidence" value="ECO:0000314"/>
    <property type="project" value="EcoCyc"/>
</dbReference>
<dbReference type="GO" id="GO:0016773">
    <property type="term" value="F:phosphotransferase activity, alcohol group as acceptor"/>
    <property type="evidence" value="ECO:0007669"/>
    <property type="project" value="UniProtKB-UniRule"/>
</dbReference>
<dbReference type="GO" id="GO:0097175">
    <property type="term" value="P:1,6-anhydro-N-acetyl-beta-muramic acid catabolic process"/>
    <property type="evidence" value="ECO:0007669"/>
    <property type="project" value="UniProtKB-UniRule"/>
</dbReference>
<dbReference type="GO" id="GO:0006040">
    <property type="term" value="P:amino sugar metabolic process"/>
    <property type="evidence" value="ECO:0007669"/>
    <property type="project" value="InterPro"/>
</dbReference>
<dbReference type="GO" id="GO:0009254">
    <property type="term" value="P:peptidoglycan turnover"/>
    <property type="evidence" value="ECO:0007669"/>
    <property type="project" value="UniProtKB-UniRule"/>
</dbReference>
<dbReference type="CDD" id="cd24050">
    <property type="entry name" value="ASKHA_NBD_ANMK"/>
    <property type="match status" value="1"/>
</dbReference>
<dbReference type="FunFam" id="3.30.420.40:FF:000090">
    <property type="entry name" value="Anhydro-N-acetylmuramic acid kinase"/>
    <property type="match status" value="1"/>
</dbReference>
<dbReference type="Gene3D" id="3.30.420.40">
    <property type="match status" value="2"/>
</dbReference>
<dbReference type="HAMAP" id="MF_01270">
    <property type="entry name" value="AnhMurNAc_kinase"/>
    <property type="match status" value="1"/>
</dbReference>
<dbReference type="InterPro" id="IPR005338">
    <property type="entry name" value="Anhydro_N_Ac-Mur_kinase"/>
</dbReference>
<dbReference type="InterPro" id="IPR043129">
    <property type="entry name" value="ATPase_NBD"/>
</dbReference>
<dbReference type="NCBIfam" id="NF007138">
    <property type="entry name" value="PRK09585.1-1"/>
    <property type="match status" value="1"/>
</dbReference>
<dbReference type="NCBIfam" id="NF007139">
    <property type="entry name" value="PRK09585.1-3"/>
    <property type="match status" value="1"/>
</dbReference>
<dbReference type="NCBIfam" id="NF007148">
    <property type="entry name" value="PRK09585.3-2"/>
    <property type="match status" value="1"/>
</dbReference>
<dbReference type="PANTHER" id="PTHR30605">
    <property type="entry name" value="ANHYDRO-N-ACETYLMURAMIC ACID KINASE"/>
    <property type="match status" value="1"/>
</dbReference>
<dbReference type="PANTHER" id="PTHR30605:SF0">
    <property type="entry name" value="ANHYDRO-N-ACETYLMURAMIC ACID KINASE"/>
    <property type="match status" value="1"/>
</dbReference>
<dbReference type="Pfam" id="PF03702">
    <property type="entry name" value="AnmK"/>
    <property type="match status" value="1"/>
</dbReference>
<dbReference type="SUPFAM" id="SSF53067">
    <property type="entry name" value="Actin-like ATPase domain"/>
    <property type="match status" value="1"/>
</dbReference>
<reference key="1">
    <citation type="journal article" date="1996" name="DNA Res.">
        <title>A 570-kb DNA sequence of the Escherichia coli K-12 genome corresponding to the 28.0-40.1 min region on the linkage map.</title>
        <authorList>
            <person name="Aiba H."/>
            <person name="Baba T."/>
            <person name="Fujita K."/>
            <person name="Hayashi K."/>
            <person name="Inada T."/>
            <person name="Isono K."/>
            <person name="Itoh T."/>
            <person name="Kasai H."/>
            <person name="Kashimoto K."/>
            <person name="Kimura S."/>
            <person name="Kitakawa M."/>
            <person name="Kitagawa M."/>
            <person name="Makino K."/>
            <person name="Miki T."/>
            <person name="Mizobuchi K."/>
            <person name="Mori H."/>
            <person name="Mori T."/>
            <person name="Motomura K."/>
            <person name="Nakade S."/>
            <person name="Nakamura Y."/>
            <person name="Nashimoto H."/>
            <person name="Nishio Y."/>
            <person name="Oshima T."/>
            <person name="Saito N."/>
            <person name="Sampei G."/>
            <person name="Seki Y."/>
            <person name="Sivasundaram S."/>
            <person name="Tagami H."/>
            <person name="Takeda J."/>
            <person name="Takemoto K."/>
            <person name="Takeuchi Y."/>
            <person name="Wada C."/>
            <person name="Yamamoto Y."/>
            <person name="Horiuchi T."/>
        </authorList>
    </citation>
    <scope>NUCLEOTIDE SEQUENCE [LARGE SCALE GENOMIC DNA]</scope>
    <source>
        <strain>K12 / W3110 / ATCC 27325 / DSM 5911</strain>
    </source>
</reference>
<reference key="2">
    <citation type="journal article" date="1997" name="Science">
        <title>The complete genome sequence of Escherichia coli K-12.</title>
        <authorList>
            <person name="Blattner F.R."/>
            <person name="Plunkett G. III"/>
            <person name="Bloch C.A."/>
            <person name="Perna N.T."/>
            <person name="Burland V."/>
            <person name="Riley M."/>
            <person name="Collado-Vides J."/>
            <person name="Glasner J.D."/>
            <person name="Rode C.K."/>
            <person name="Mayhew G.F."/>
            <person name="Gregor J."/>
            <person name="Davis N.W."/>
            <person name="Kirkpatrick H.A."/>
            <person name="Goeden M.A."/>
            <person name="Rose D.J."/>
            <person name="Mau B."/>
            <person name="Shao Y."/>
        </authorList>
    </citation>
    <scope>NUCLEOTIDE SEQUENCE [LARGE SCALE GENOMIC DNA]</scope>
    <source>
        <strain>K12 / MG1655 / ATCC 47076</strain>
    </source>
</reference>
<reference key="3">
    <citation type="journal article" date="2006" name="Mol. Syst. Biol.">
        <title>Highly accurate genome sequences of Escherichia coli K-12 strains MG1655 and W3110.</title>
        <authorList>
            <person name="Hayashi K."/>
            <person name="Morooka N."/>
            <person name="Yamamoto Y."/>
            <person name="Fujita K."/>
            <person name="Isono K."/>
            <person name="Choi S."/>
            <person name="Ohtsubo E."/>
            <person name="Baba T."/>
            <person name="Wanner B.L."/>
            <person name="Mori H."/>
            <person name="Horiuchi T."/>
        </authorList>
    </citation>
    <scope>NUCLEOTIDE SEQUENCE [LARGE SCALE GENOMIC DNA]</scope>
    <source>
        <strain>K12 / W3110 / ATCC 27325 / DSM 5911</strain>
    </source>
</reference>
<reference key="4">
    <citation type="journal article" date="2005" name="J. Bacteriol.">
        <title>Recycling of the anhydro-N-acetylmuramic acid derived from cell wall murein involves a two-step conversion to N-acetylglucosamine-phosphate.</title>
        <authorList>
            <person name="Uehara T."/>
            <person name="Suefuji K."/>
            <person name="Valbuena N."/>
            <person name="Meehan B."/>
            <person name="Donegan M."/>
            <person name="Park J.T."/>
        </authorList>
    </citation>
    <scope>FUNCTION</scope>
    <scope>CATALYTIC ACTIVITY</scope>
    <scope>IDENTIFICATION BY MASS SPECTROMETRY</scope>
    <scope>ACTIVITY REGULATION</scope>
    <scope>BIOPHYSICOCHEMICAL PROPERTIES</scope>
    <source>
        <strain>K12 / MG1655 / ATCC 47076</strain>
    </source>
</reference>
<reference key="5">
    <citation type="journal article" date="2006" name="J. Bacteriol.">
        <title>MurQ etherase is required by Escherichia coli in order to metabolize anhydro-N-acetylmuramic acid obtained either from the environment or from its own cell wall.</title>
        <authorList>
            <person name="Uehara T."/>
            <person name="Suefuji K."/>
            <person name="Jaeger T."/>
            <person name="Mayer C."/>
            <person name="Park J.T."/>
        </authorList>
    </citation>
    <scope>FUNCTION</scope>
</reference>
<protein>
    <recommendedName>
        <fullName>Anhydro-N-acetylmuramic acid kinase</fullName>
        <ecNumber>2.7.1.170</ecNumber>
    </recommendedName>
    <alternativeName>
        <fullName>AnhMurNAc kinase</fullName>
    </alternativeName>
</protein>
<gene>
    <name type="primary">anmK</name>
    <name type="synonym">ydhH</name>
    <name type="ordered locus">b1640</name>
    <name type="ordered locus">JW1632</name>
</gene>
<name>ANMK_ECOLI</name>
<sequence length="369" mass="39496">MKSGRFIGVMSGTSLDGVDVVLATIDEHRVAQLASLSWPIPVSLKQAVLDICQGQQLTLSQFGQLDTQLGQLFADAVNALLKEQNLQARDIVAIGCHGQTVWHEPTGVAPHTLQIGDNNQIVARTGITVVGDFRRRDIALGGQGAPLVPAFHHALLAHPTERRMVLNIGGIANLSLLIPGQPVGGYDTGPGNMLMDAWIWRQAGKPYDKDAEWARAGKVILPLLQNMLSDPYFSQPAPKSTGREYFNYGWLERHLRHFPGVDPRDVQATLAELTAVTISEQVLLSGGCERLMVCGGGSRNPLLMARLAALLPGTEVTTTDAVGISGDDMEALAFAWLAWRTLAGLPGNLPSVTGASQETVLGAIFPANP</sequence>
<comment type="function">
    <text evidence="2 3">Catalyzes the specific phosphorylation of 1,6-anhydro-N-acetylmuramic acid (anhMurNAc) with the simultaneous cleavage of the 1,6-anhydro ring, generating MurNAc-6-P. Is required for the utilization of anhMurNAc either imported from the medium or derived from its own cell wall murein, and thus plays a role in cell wall recycling.</text>
</comment>
<comment type="catalytic activity">
    <reaction evidence="2">
        <text>1,6-anhydro-N-acetyl-beta-muramate + ATP + H2O = N-acetyl-D-muramate 6-phosphate + ADP + H(+)</text>
        <dbReference type="Rhea" id="RHEA:24952"/>
        <dbReference type="ChEBI" id="CHEBI:15377"/>
        <dbReference type="ChEBI" id="CHEBI:15378"/>
        <dbReference type="ChEBI" id="CHEBI:30616"/>
        <dbReference type="ChEBI" id="CHEBI:58690"/>
        <dbReference type="ChEBI" id="CHEBI:58722"/>
        <dbReference type="ChEBI" id="CHEBI:456216"/>
        <dbReference type="EC" id="2.7.1.170"/>
    </reaction>
</comment>
<comment type="activity regulation">
    <text evidence="2">Strongly inhibited by ADP.</text>
</comment>
<comment type="biophysicochemical properties">
    <kinetics>
        <KM evidence="2">1 mM for anhMurNAc</KM>
        <KM evidence="2">1 mM for ATP</KM>
        <Vmax evidence="2">180.0 umol/min/mg enzyme</Vmax>
    </kinetics>
    <phDependence>
        <text evidence="2">Optimum pH is 10-11. Inactive at pH 4.5.</text>
    </phDependence>
</comment>
<comment type="pathway">
    <text>Amino-sugar metabolism; 1,6-anhydro-N-acetylmuramate degradation.</text>
</comment>
<comment type="pathway">
    <text>Cell wall biogenesis; peptidoglycan recycling.</text>
</comment>
<comment type="similarity">
    <text evidence="4">Belongs to the anhydro-N-acetylmuramic acid kinase family.</text>
</comment>